<dbReference type="EC" id="4.2.1.33" evidence="1"/>
<dbReference type="EMBL" id="CP000319">
    <property type="protein sequence ID" value="ABE64313.1"/>
    <property type="molecule type" value="Genomic_DNA"/>
</dbReference>
<dbReference type="RefSeq" id="WP_011511954.1">
    <property type="nucleotide sequence ID" value="NC_007964.1"/>
</dbReference>
<dbReference type="SMR" id="Q1QHI4"/>
<dbReference type="STRING" id="323097.Nham_3584"/>
<dbReference type="KEGG" id="nha:Nham_3584"/>
<dbReference type="eggNOG" id="COG0065">
    <property type="taxonomic scope" value="Bacteria"/>
</dbReference>
<dbReference type="HOGENOM" id="CLU_006714_3_4_5"/>
<dbReference type="OrthoDB" id="9802769at2"/>
<dbReference type="UniPathway" id="UPA00048">
    <property type="reaction ID" value="UER00071"/>
</dbReference>
<dbReference type="Proteomes" id="UP000001953">
    <property type="component" value="Chromosome"/>
</dbReference>
<dbReference type="GO" id="GO:0003861">
    <property type="term" value="F:3-isopropylmalate dehydratase activity"/>
    <property type="evidence" value="ECO:0007669"/>
    <property type="project" value="UniProtKB-UniRule"/>
</dbReference>
<dbReference type="GO" id="GO:0051539">
    <property type="term" value="F:4 iron, 4 sulfur cluster binding"/>
    <property type="evidence" value="ECO:0007669"/>
    <property type="project" value="UniProtKB-KW"/>
</dbReference>
<dbReference type="GO" id="GO:0046872">
    <property type="term" value="F:metal ion binding"/>
    <property type="evidence" value="ECO:0007669"/>
    <property type="project" value="UniProtKB-KW"/>
</dbReference>
<dbReference type="GO" id="GO:0009098">
    <property type="term" value="P:L-leucine biosynthetic process"/>
    <property type="evidence" value="ECO:0007669"/>
    <property type="project" value="UniProtKB-UniRule"/>
</dbReference>
<dbReference type="CDD" id="cd01583">
    <property type="entry name" value="IPMI"/>
    <property type="match status" value="1"/>
</dbReference>
<dbReference type="FunFam" id="3.30.499.10:FF:000007">
    <property type="entry name" value="3-isopropylmalate dehydratase large subunit"/>
    <property type="match status" value="1"/>
</dbReference>
<dbReference type="Gene3D" id="3.30.499.10">
    <property type="entry name" value="Aconitase, domain 3"/>
    <property type="match status" value="2"/>
</dbReference>
<dbReference type="HAMAP" id="MF_01026">
    <property type="entry name" value="LeuC_type1"/>
    <property type="match status" value="1"/>
</dbReference>
<dbReference type="InterPro" id="IPR004430">
    <property type="entry name" value="3-IsopropMal_deHydase_lsu"/>
</dbReference>
<dbReference type="InterPro" id="IPR015931">
    <property type="entry name" value="Acnase/IPM_dHydase_lsu_aba_1/3"/>
</dbReference>
<dbReference type="InterPro" id="IPR001030">
    <property type="entry name" value="Acoase/IPM_deHydtase_lsu_aba"/>
</dbReference>
<dbReference type="InterPro" id="IPR018136">
    <property type="entry name" value="Aconitase_4Fe-4S_BS"/>
</dbReference>
<dbReference type="InterPro" id="IPR036008">
    <property type="entry name" value="Aconitase_4Fe-4S_dom"/>
</dbReference>
<dbReference type="InterPro" id="IPR050067">
    <property type="entry name" value="IPM_dehydratase_rel_enz"/>
</dbReference>
<dbReference type="InterPro" id="IPR033941">
    <property type="entry name" value="IPMI_cat"/>
</dbReference>
<dbReference type="NCBIfam" id="TIGR00170">
    <property type="entry name" value="leuC"/>
    <property type="match status" value="1"/>
</dbReference>
<dbReference type="NCBIfam" id="NF004016">
    <property type="entry name" value="PRK05478.1"/>
    <property type="match status" value="1"/>
</dbReference>
<dbReference type="NCBIfam" id="NF009116">
    <property type="entry name" value="PRK12466.1"/>
    <property type="match status" value="1"/>
</dbReference>
<dbReference type="PANTHER" id="PTHR43822:SF9">
    <property type="entry name" value="3-ISOPROPYLMALATE DEHYDRATASE"/>
    <property type="match status" value="1"/>
</dbReference>
<dbReference type="PANTHER" id="PTHR43822">
    <property type="entry name" value="HOMOACONITASE, MITOCHONDRIAL-RELATED"/>
    <property type="match status" value="1"/>
</dbReference>
<dbReference type="Pfam" id="PF00330">
    <property type="entry name" value="Aconitase"/>
    <property type="match status" value="1"/>
</dbReference>
<dbReference type="PRINTS" id="PR00415">
    <property type="entry name" value="ACONITASE"/>
</dbReference>
<dbReference type="SUPFAM" id="SSF53732">
    <property type="entry name" value="Aconitase iron-sulfur domain"/>
    <property type="match status" value="1"/>
</dbReference>
<dbReference type="PROSITE" id="PS00450">
    <property type="entry name" value="ACONITASE_1"/>
    <property type="match status" value="1"/>
</dbReference>
<dbReference type="PROSITE" id="PS01244">
    <property type="entry name" value="ACONITASE_2"/>
    <property type="match status" value="1"/>
</dbReference>
<comment type="function">
    <text evidence="1">Catalyzes the isomerization between 2-isopropylmalate and 3-isopropylmalate, via the formation of 2-isopropylmaleate.</text>
</comment>
<comment type="catalytic activity">
    <reaction evidence="1">
        <text>(2R,3S)-3-isopropylmalate = (2S)-2-isopropylmalate</text>
        <dbReference type="Rhea" id="RHEA:32287"/>
        <dbReference type="ChEBI" id="CHEBI:1178"/>
        <dbReference type="ChEBI" id="CHEBI:35121"/>
        <dbReference type="EC" id="4.2.1.33"/>
    </reaction>
</comment>
<comment type="cofactor">
    <cofactor evidence="1">
        <name>[4Fe-4S] cluster</name>
        <dbReference type="ChEBI" id="CHEBI:49883"/>
    </cofactor>
    <text evidence="1">Binds 1 [4Fe-4S] cluster per subunit.</text>
</comment>
<comment type="pathway">
    <text evidence="1">Amino-acid biosynthesis; L-leucine biosynthesis; L-leucine from 3-methyl-2-oxobutanoate: step 2/4.</text>
</comment>
<comment type="subunit">
    <text evidence="1">Heterodimer of LeuC and LeuD.</text>
</comment>
<comment type="similarity">
    <text evidence="1">Belongs to the aconitase/IPM isomerase family. LeuC type 1 subfamily.</text>
</comment>
<keyword id="KW-0004">4Fe-4S</keyword>
<keyword id="KW-0028">Amino-acid biosynthesis</keyword>
<keyword id="KW-0100">Branched-chain amino acid biosynthesis</keyword>
<keyword id="KW-0408">Iron</keyword>
<keyword id="KW-0411">Iron-sulfur</keyword>
<keyword id="KW-0432">Leucine biosynthesis</keyword>
<keyword id="KW-0456">Lyase</keyword>
<keyword id="KW-0479">Metal-binding</keyword>
<keyword id="KW-1185">Reference proteome</keyword>
<evidence type="ECO:0000255" key="1">
    <source>
        <dbReference type="HAMAP-Rule" id="MF_01026"/>
    </source>
</evidence>
<gene>
    <name evidence="1" type="primary">leuC</name>
    <name type="ordered locus">Nham_3584</name>
</gene>
<feature type="chain" id="PRO_1000063576" description="3-isopropylmalate dehydratase large subunit">
    <location>
        <begin position="1"/>
        <end position="468"/>
    </location>
</feature>
<feature type="binding site" evidence="1">
    <location>
        <position position="349"/>
    </location>
    <ligand>
        <name>[4Fe-4S] cluster</name>
        <dbReference type="ChEBI" id="CHEBI:49883"/>
    </ligand>
</feature>
<feature type="binding site" evidence="1">
    <location>
        <position position="409"/>
    </location>
    <ligand>
        <name>[4Fe-4S] cluster</name>
        <dbReference type="ChEBI" id="CHEBI:49883"/>
    </ligand>
</feature>
<feature type="binding site" evidence="1">
    <location>
        <position position="412"/>
    </location>
    <ligand>
        <name>[4Fe-4S] cluster</name>
        <dbReference type="ChEBI" id="CHEBI:49883"/>
    </ligand>
</feature>
<proteinExistence type="inferred from homology"/>
<organism>
    <name type="scientific">Nitrobacter hamburgensis (strain DSM 10229 / NCIMB 13809 / X14)</name>
    <dbReference type="NCBI Taxonomy" id="323097"/>
    <lineage>
        <taxon>Bacteria</taxon>
        <taxon>Pseudomonadati</taxon>
        <taxon>Pseudomonadota</taxon>
        <taxon>Alphaproteobacteria</taxon>
        <taxon>Hyphomicrobiales</taxon>
        <taxon>Nitrobacteraceae</taxon>
        <taxon>Nitrobacter</taxon>
    </lineage>
</organism>
<name>LEUC_NITHX</name>
<protein>
    <recommendedName>
        <fullName evidence="1">3-isopropylmalate dehydratase large subunit</fullName>
        <ecNumber evidence="1">4.2.1.33</ecNumber>
    </recommendedName>
    <alternativeName>
        <fullName evidence="1">Alpha-IPM isomerase</fullName>
        <shortName evidence="1">IPMI</shortName>
    </alternativeName>
    <alternativeName>
        <fullName evidence="1">Isopropylmalate isomerase</fullName>
    </alternativeName>
</protein>
<reference key="1">
    <citation type="submission" date="2006-03" db="EMBL/GenBank/DDBJ databases">
        <title>Complete sequence of chromosome of Nitrobacter hamburgensis X14.</title>
        <authorList>
            <consortium name="US DOE Joint Genome Institute"/>
            <person name="Copeland A."/>
            <person name="Lucas S."/>
            <person name="Lapidus A."/>
            <person name="Barry K."/>
            <person name="Detter J.C."/>
            <person name="Glavina del Rio T."/>
            <person name="Hammon N."/>
            <person name="Israni S."/>
            <person name="Dalin E."/>
            <person name="Tice H."/>
            <person name="Pitluck S."/>
            <person name="Chain P."/>
            <person name="Malfatti S."/>
            <person name="Shin M."/>
            <person name="Vergez L."/>
            <person name="Schmutz J."/>
            <person name="Larimer F."/>
            <person name="Land M."/>
            <person name="Hauser L."/>
            <person name="Kyrpides N."/>
            <person name="Ivanova N."/>
            <person name="Ward B."/>
            <person name="Arp D."/>
            <person name="Klotz M."/>
            <person name="Stein L."/>
            <person name="O'Mullan G."/>
            <person name="Starkenburg S."/>
            <person name="Sayavedra L."/>
            <person name="Poret-Peterson A.T."/>
            <person name="Gentry M.E."/>
            <person name="Bruce D."/>
            <person name="Richardson P."/>
        </authorList>
    </citation>
    <scope>NUCLEOTIDE SEQUENCE [LARGE SCALE GENOMIC DNA]</scope>
    <source>
        <strain>DSM 10229 / NCIMB 13809 / X14</strain>
    </source>
</reference>
<accession>Q1QHI4</accession>
<sequence length="468" mass="50695">MSKPTTLYDKIWNDHLVHEAEDGTCLIYIDRHLVHEVTSPQAFEGLRVAGRKVHAPEKTLAVVDHNVPTTDRTKPNPDPESAEQIATLAQNAKDFGIEYYNEFDKRQGIVHVIGPEQGFTLPGTTIVCGDSHTSTHGAFGALAHGIGTSEVEHVLATQTLIQKKAKNMRAVVYGTLPDGVTAKDIILAIIGEIGTAGGTGYVLEYAGEAIRALTMEGRMTVCNMSIEGGARAGLVAPDEKAYEFLKGRPKAPRGADWDAAMRYWETLRSDDGAHFDHEIRLDAARLPPIVTWGTSPEDVISVTGKVPNPADIADEAKRLSKERALHYMGLAAGTRITDITLDRVFIGSCTNGRIEDLRAAAKIADGRTVNGNVNAMVVPGSGLVKEQAEAEGLDKIFIKAGFEWREPGCSMCLAMNPDKLKPEERCASTSNRNFEGRQGFKGRTHLVSPAMAAAAAIAGHFVDVREWH</sequence>